<comment type="function">
    <text evidence="1">ATP-binding RNA helicase involved in the biogenesis of 60S ribosomal subunits and is required for the normal formation of 25S and 5.8S rRNAs.</text>
</comment>
<comment type="catalytic activity">
    <reaction>
        <text>ATP + H2O = ADP + phosphate + H(+)</text>
        <dbReference type="Rhea" id="RHEA:13065"/>
        <dbReference type="ChEBI" id="CHEBI:15377"/>
        <dbReference type="ChEBI" id="CHEBI:15378"/>
        <dbReference type="ChEBI" id="CHEBI:30616"/>
        <dbReference type="ChEBI" id="CHEBI:43474"/>
        <dbReference type="ChEBI" id="CHEBI:456216"/>
        <dbReference type="EC" id="3.6.4.13"/>
    </reaction>
</comment>
<comment type="subcellular location">
    <subcellularLocation>
        <location evidence="1">Nucleus</location>
        <location evidence="1">Nucleolus</location>
    </subcellularLocation>
</comment>
<comment type="domain">
    <text>The Q motif is unique to and characteristic of the DEAD box family of RNA helicases and controls ATP binding and hydrolysis.</text>
</comment>
<comment type="similarity">
    <text evidence="5">Belongs to the DEAD box helicase family. DDX24/MAK5 subfamily.</text>
</comment>
<feature type="chain" id="PRO_0000227957" description="ATP-dependent RNA helicase MAK5">
    <location>
        <begin position="1"/>
        <end position="752"/>
    </location>
</feature>
<feature type="domain" description="Helicase ATP-binding" evidence="2">
    <location>
        <begin position="211"/>
        <end position="402"/>
    </location>
</feature>
<feature type="domain" description="Helicase C-terminal" evidence="3">
    <location>
        <begin position="454"/>
        <end position="609"/>
    </location>
</feature>
<feature type="region of interest" description="Disordered" evidence="4">
    <location>
        <begin position="1"/>
        <end position="33"/>
    </location>
</feature>
<feature type="region of interest" description="Disordered" evidence="4">
    <location>
        <begin position="127"/>
        <end position="157"/>
    </location>
</feature>
<feature type="short sequence motif" description="Q motif">
    <location>
        <begin position="180"/>
        <end position="208"/>
    </location>
</feature>
<feature type="short sequence motif" description="DEAD box">
    <location>
        <begin position="340"/>
        <end position="343"/>
    </location>
</feature>
<feature type="compositionally biased region" description="Basic residues" evidence="4">
    <location>
        <begin position="8"/>
        <end position="29"/>
    </location>
</feature>
<feature type="binding site" evidence="2">
    <location>
        <begin position="224"/>
        <end position="231"/>
    </location>
    <ligand>
        <name>ATP</name>
        <dbReference type="ChEBI" id="CHEBI:30616"/>
    </ligand>
</feature>
<proteinExistence type="inferred from homology"/>
<protein>
    <recommendedName>
        <fullName>ATP-dependent RNA helicase MAK5</fullName>
        <ecNumber>3.6.4.13</ecNumber>
    </recommendedName>
</protein>
<name>MAK5_EREGS</name>
<reference key="1">
    <citation type="journal article" date="2004" name="Science">
        <title>The Ashbya gossypii genome as a tool for mapping the ancient Saccharomyces cerevisiae genome.</title>
        <authorList>
            <person name="Dietrich F.S."/>
            <person name="Voegeli S."/>
            <person name="Brachat S."/>
            <person name="Lerch A."/>
            <person name="Gates K."/>
            <person name="Steiner S."/>
            <person name="Mohr C."/>
            <person name="Poehlmann R."/>
            <person name="Luedi P."/>
            <person name="Choi S."/>
            <person name="Wing R.A."/>
            <person name="Flavier A."/>
            <person name="Gaffney T.D."/>
            <person name="Philippsen P."/>
        </authorList>
    </citation>
    <scope>NUCLEOTIDE SEQUENCE [LARGE SCALE GENOMIC DNA]</scope>
    <source>
        <strain>ATCC 10895 / CBS 109.51 / FGSC 9923 / NRRL Y-1056</strain>
    </source>
</reference>
<reference key="2">
    <citation type="journal article" date="2013" name="G3 (Bethesda)">
        <title>Genomes of Ashbya fungi isolated from insects reveal four mating-type loci, numerous translocations, lack of transposons, and distinct gene duplications.</title>
        <authorList>
            <person name="Dietrich F.S."/>
            <person name="Voegeli S."/>
            <person name="Kuo S."/>
            <person name="Philippsen P."/>
        </authorList>
    </citation>
    <scope>GENOME REANNOTATION</scope>
    <source>
        <strain>ATCC 10895 / CBS 109.51 / FGSC 9923 / NRRL Y-1056</strain>
    </source>
</reference>
<accession>Q757I6</accession>
<dbReference type="EC" id="3.6.4.13"/>
<dbReference type="EMBL" id="AE016818">
    <property type="protein sequence ID" value="AAS52711.1"/>
    <property type="molecule type" value="Genomic_DNA"/>
</dbReference>
<dbReference type="RefSeq" id="NP_984887.1">
    <property type="nucleotide sequence ID" value="NM_210241.1"/>
</dbReference>
<dbReference type="SMR" id="Q757I6"/>
<dbReference type="FunCoup" id="Q757I6">
    <property type="interactions" value="1015"/>
</dbReference>
<dbReference type="STRING" id="284811.Q757I6"/>
<dbReference type="EnsemblFungi" id="AAS52711">
    <property type="protein sequence ID" value="AAS52711"/>
    <property type="gene ID" value="AGOS_AER027W"/>
</dbReference>
<dbReference type="GeneID" id="4621089"/>
<dbReference type="KEGG" id="ago:AGOS_AER027W"/>
<dbReference type="eggNOG" id="KOG0347">
    <property type="taxonomic scope" value="Eukaryota"/>
</dbReference>
<dbReference type="HOGENOM" id="CLU_003041_13_0_1"/>
<dbReference type="InParanoid" id="Q757I6"/>
<dbReference type="OMA" id="YYFVERY"/>
<dbReference type="OrthoDB" id="4310724at2759"/>
<dbReference type="Proteomes" id="UP000000591">
    <property type="component" value="Chromosome V"/>
</dbReference>
<dbReference type="GO" id="GO:0005730">
    <property type="term" value="C:nucleolus"/>
    <property type="evidence" value="ECO:0000318"/>
    <property type="project" value="GO_Central"/>
</dbReference>
<dbReference type="GO" id="GO:0005524">
    <property type="term" value="F:ATP binding"/>
    <property type="evidence" value="ECO:0007669"/>
    <property type="project" value="UniProtKB-KW"/>
</dbReference>
<dbReference type="GO" id="GO:0016887">
    <property type="term" value="F:ATP hydrolysis activity"/>
    <property type="evidence" value="ECO:0007669"/>
    <property type="project" value="RHEA"/>
</dbReference>
<dbReference type="GO" id="GO:0003723">
    <property type="term" value="F:RNA binding"/>
    <property type="evidence" value="ECO:0007669"/>
    <property type="project" value="UniProtKB-KW"/>
</dbReference>
<dbReference type="GO" id="GO:0003724">
    <property type="term" value="F:RNA helicase activity"/>
    <property type="evidence" value="ECO:0007669"/>
    <property type="project" value="UniProtKB-EC"/>
</dbReference>
<dbReference type="GO" id="GO:0000466">
    <property type="term" value="P:maturation of 5.8S rRNA from tricistronic rRNA transcript (SSU-rRNA, 5.8S rRNA, LSU-rRNA)"/>
    <property type="evidence" value="ECO:0007669"/>
    <property type="project" value="EnsemblFungi"/>
</dbReference>
<dbReference type="GO" id="GO:0000463">
    <property type="term" value="P:maturation of LSU-rRNA from tricistronic rRNA transcript (SSU-rRNA, 5.8S rRNA, LSU-rRNA)"/>
    <property type="evidence" value="ECO:0007669"/>
    <property type="project" value="EnsemblFungi"/>
</dbReference>
<dbReference type="CDD" id="cd17946">
    <property type="entry name" value="DEADc_DDX24"/>
    <property type="match status" value="1"/>
</dbReference>
<dbReference type="CDD" id="cd18787">
    <property type="entry name" value="SF2_C_DEAD"/>
    <property type="match status" value="1"/>
</dbReference>
<dbReference type="Gene3D" id="3.40.50.300">
    <property type="entry name" value="P-loop containing nucleotide triphosphate hydrolases"/>
    <property type="match status" value="2"/>
</dbReference>
<dbReference type="InterPro" id="IPR011545">
    <property type="entry name" value="DEAD/DEAH_box_helicase_dom"/>
</dbReference>
<dbReference type="InterPro" id="IPR050079">
    <property type="entry name" value="DEAD_box_RNA_helicase"/>
</dbReference>
<dbReference type="InterPro" id="IPR014001">
    <property type="entry name" value="Helicase_ATP-bd"/>
</dbReference>
<dbReference type="InterPro" id="IPR001650">
    <property type="entry name" value="Helicase_C-like"/>
</dbReference>
<dbReference type="InterPro" id="IPR027417">
    <property type="entry name" value="P-loop_NTPase"/>
</dbReference>
<dbReference type="InterPro" id="IPR000629">
    <property type="entry name" value="RNA-helicase_DEAD-box_CS"/>
</dbReference>
<dbReference type="InterPro" id="IPR014014">
    <property type="entry name" value="RNA_helicase_DEAD_Q_motif"/>
</dbReference>
<dbReference type="PANTHER" id="PTHR47959:SF1">
    <property type="entry name" value="ATP-DEPENDENT RNA HELICASE DBPA"/>
    <property type="match status" value="1"/>
</dbReference>
<dbReference type="PANTHER" id="PTHR47959">
    <property type="entry name" value="ATP-DEPENDENT RNA HELICASE RHLE-RELATED"/>
    <property type="match status" value="1"/>
</dbReference>
<dbReference type="Pfam" id="PF00270">
    <property type="entry name" value="DEAD"/>
    <property type="match status" value="1"/>
</dbReference>
<dbReference type="Pfam" id="PF00271">
    <property type="entry name" value="Helicase_C"/>
    <property type="match status" value="1"/>
</dbReference>
<dbReference type="SMART" id="SM00487">
    <property type="entry name" value="DEXDc"/>
    <property type="match status" value="1"/>
</dbReference>
<dbReference type="SMART" id="SM00490">
    <property type="entry name" value="HELICc"/>
    <property type="match status" value="1"/>
</dbReference>
<dbReference type="SUPFAM" id="SSF52540">
    <property type="entry name" value="P-loop containing nucleoside triphosphate hydrolases"/>
    <property type="match status" value="1"/>
</dbReference>
<dbReference type="PROSITE" id="PS00039">
    <property type="entry name" value="DEAD_ATP_HELICASE"/>
    <property type="match status" value="1"/>
</dbReference>
<dbReference type="PROSITE" id="PS51192">
    <property type="entry name" value="HELICASE_ATP_BIND_1"/>
    <property type="match status" value="1"/>
</dbReference>
<dbReference type="PROSITE" id="PS51194">
    <property type="entry name" value="HELICASE_CTER"/>
    <property type="match status" value="1"/>
</dbReference>
<dbReference type="PROSITE" id="PS51195">
    <property type="entry name" value="Q_MOTIF"/>
    <property type="match status" value="1"/>
</dbReference>
<keyword id="KW-0067">ATP-binding</keyword>
<keyword id="KW-0347">Helicase</keyword>
<keyword id="KW-0378">Hydrolase</keyword>
<keyword id="KW-0547">Nucleotide-binding</keyword>
<keyword id="KW-0539">Nucleus</keyword>
<keyword id="KW-1185">Reference proteome</keyword>
<keyword id="KW-0690">Ribosome biogenesis</keyword>
<keyword id="KW-0694">RNA-binding</keyword>
<keyword id="KW-0698">rRNA processing</keyword>
<sequence>MSPTNNGRNKKLGPRRKVPGRVSKSKSRAKVQAGDAKRVLDANALKWEKVDVPDTLGDFGGFYGLEEIDGVDVEVVDGKVQFVARDESRLKSPADAVDGTDMVEVDEDAGMEDVTEFRNLDDVAEGELSALSDEGSASEDDGSDSSGSSDMDEDDDQELQSEIFNKDIGLDEAEAPELPSWTNTMKLSATVLQGLSRLGFSNPTEIQLQSIPKALDGHDIMGKASTGSGKTLAYGIPILEGIIRDDTDSRPIGLIFTPTRELAHQVTDHLREVGALLVKRNPYSIMCLTGGLSIQKQERLLKYKGSARVVVATPGRFLELLEKDQTLIDRFAKVDTLVLDEADRLLQDGHFEEFERILKHLSRARKFTNGKKHGWKTMIYSATFSLDYFNKLSNTSWKKMKKAPSENEMEEVLKHLMTKIPFRGKPLIIDTNPEQKVASQIKESLIECLPTERDLYVYYFVTLYPGTTLVFCNAIDSVKKLNAYLHNLKISAFQIHSSMLQKNRLKSLEKFQEQAKKNQALNKPTVLIASDVAARGLDIPGIQHVIHYHLPRSADVYIHRSGRTARAENEGVAVTICSPQEAMGPLRKLRRVLAGKAGSKGKRWQNEIALLPVEPDIVSQLRERSRLASALADSEIATSSLSKDDNWLKKAADDLGIDVDSDDETKDTFLAKNKTKKLNKQLDKSTSKSYKMELNALLNTPIRKDARKSYLTGGLSNLADDLTKKKGHSSIIGHDKVDALTLLKSKSKRAKR</sequence>
<gene>
    <name type="primary">MAK5</name>
    <name type="ordered locus">AER027W</name>
</gene>
<organism>
    <name type="scientific">Eremothecium gossypii (strain ATCC 10895 / CBS 109.51 / FGSC 9923 / NRRL Y-1056)</name>
    <name type="common">Yeast</name>
    <name type="synonym">Ashbya gossypii</name>
    <dbReference type="NCBI Taxonomy" id="284811"/>
    <lineage>
        <taxon>Eukaryota</taxon>
        <taxon>Fungi</taxon>
        <taxon>Dikarya</taxon>
        <taxon>Ascomycota</taxon>
        <taxon>Saccharomycotina</taxon>
        <taxon>Saccharomycetes</taxon>
        <taxon>Saccharomycetales</taxon>
        <taxon>Saccharomycetaceae</taxon>
        <taxon>Eremothecium</taxon>
    </lineage>
</organism>
<evidence type="ECO:0000250" key="1"/>
<evidence type="ECO:0000255" key="2">
    <source>
        <dbReference type="PROSITE-ProRule" id="PRU00541"/>
    </source>
</evidence>
<evidence type="ECO:0000255" key="3">
    <source>
        <dbReference type="PROSITE-ProRule" id="PRU00542"/>
    </source>
</evidence>
<evidence type="ECO:0000256" key="4">
    <source>
        <dbReference type="SAM" id="MobiDB-lite"/>
    </source>
</evidence>
<evidence type="ECO:0000305" key="5"/>